<name>TAS2_PYRO7</name>
<evidence type="ECO:0000255" key="1">
    <source>
        <dbReference type="PROSITE-ProRule" id="PRU00227"/>
    </source>
</evidence>
<evidence type="ECO:0000256" key="2">
    <source>
        <dbReference type="SAM" id="MobiDB-lite"/>
    </source>
</evidence>
<evidence type="ECO:0000269" key="3">
    <source>
    </source>
</evidence>
<evidence type="ECO:0000269" key="4">
    <source>
    </source>
</evidence>
<evidence type="ECO:0000303" key="5">
    <source>
    </source>
</evidence>
<organism>
    <name type="scientific">Pyricularia oryzae (strain 70-15 / ATCC MYA-4617 / FGSC 8958)</name>
    <name type="common">Rice blast fungus</name>
    <name type="synonym">Magnaporthe oryzae</name>
    <dbReference type="NCBI Taxonomy" id="242507"/>
    <lineage>
        <taxon>Eukaryota</taxon>
        <taxon>Fungi</taxon>
        <taxon>Dikarya</taxon>
        <taxon>Ascomycota</taxon>
        <taxon>Pezizomycotina</taxon>
        <taxon>Sordariomycetes</taxon>
        <taxon>Sordariomycetidae</taxon>
        <taxon>Magnaporthales</taxon>
        <taxon>Pyriculariaceae</taxon>
        <taxon>Pyricularia</taxon>
    </lineage>
</organism>
<reference key="1">
    <citation type="journal article" date="2005" name="Nature">
        <title>The genome sequence of the rice blast fungus Magnaporthe grisea.</title>
        <authorList>
            <person name="Dean R.A."/>
            <person name="Talbot N.J."/>
            <person name="Ebbole D.J."/>
            <person name="Farman M.L."/>
            <person name="Mitchell T.K."/>
            <person name="Orbach M.J."/>
            <person name="Thon M.R."/>
            <person name="Kulkarni R."/>
            <person name="Xu J.-R."/>
            <person name="Pan H."/>
            <person name="Read N.D."/>
            <person name="Lee Y.-H."/>
            <person name="Carbone I."/>
            <person name="Brown D."/>
            <person name="Oh Y.Y."/>
            <person name="Donofrio N."/>
            <person name="Jeong J.S."/>
            <person name="Soanes D.M."/>
            <person name="Djonovic S."/>
            <person name="Kolomiets E."/>
            <person name="Rehmeyer C."/>
            <person name="Li W."/>
            <person name="Harding M."/>
            <person name="Kim S."/>
            <person name="Lebrun M.-H."/>
            <person name="Bohnert H."/>
            <person name="Coughlan S."/>
            <person name="Butler J."/>
            <person name="Calvo S.E."/>
            <person name="Ma L.-J."/>
            <person name="Nicol R."/>
            <person name="Purcell S."/>
            <person name="Nusbaum C."/>
            <person name="Galagan J.E."/>
            <person name="Birren B.W."/>
        </authorList>
    </citation>
    <scope>NUCLEOTIDE SEQUENCE [LARGE SCALE GENOMIC DNA]</scope>
    <source>
        <strain>70-15 / ATCC MYA-4617 / FGSC 8958</strain>
    </source>
</reference>
<reference key="2">
    <citation type="journal article" date="2017" name="ACS Chem. Biol.">
        <title>Regulatory mechanism of mycotoxin tenuazonic acid production in Pyricularia oryzae.</title>
        <authorList>
            <person name="Yun C.S."/>
            <person name="Motoyama T."/>
            <person name="Osada H."/>
        </authorList>
    </citation>
    <scope>FUNCTION</scope>
    <scope>DISRUPTION PHENOTYPE</scope>
</reference>
<reference key="3">
    <citation type="journal article" date="2020" name="Front. Microbiol.">
        <title>Mycovirus-induced tenuazonic acid production in a rice blast fungus Magnaporthe oryzae.</title>
        <authorList>
            <person name="Ninomiya A."/>
            <person name="Urayama S.I."/>
            <person name="Suo R."/>
            <person name="Itoi S."/>
            <person name="Fuji S.I."/>
            <person name="Moriyama H."/>
            <person name="Hagiwara D."/>
        </authorList>
    </citation>
    <scope>FUNCTION</scope>
    <scope>INDUCTION</scope>
</reference>
<comment type="function">
    <text evidence="3 4">Transcription factor; part of the gene cluster that mediates the biosynthesis of the toxin tenuazonic acid (TeA), an inhibitor of protein biosynthesis on ribosomes by suppressing the release of new protein (PubMed:28820236, PubMed:32765467). Directly regulates the expression of the hybrid PKS-NRPS synthetase TAS1 and the subsequent production of TeA (PubMed:32765467).</text>
</comment>
<comment type="subcellular location">
    <subcellularLocation>
        <location evidence="1">Nucleus</location>
    </subcellularLocation>
</comment>
<comment type="induction">
    <text evidence="3 4">Expression is induced by the presence of dimethylsulphoxide (DMSO) or by the deletion of OSM1, a HOG1-related mitogen-activated protein kinase (PubMed:28820236). Expression is positively regulated by the secondary metabolism regulator LAE1 (PubMed:28820236). Infection by the totivirus induces the transcription of TAS2 (PubMed:32765467).</text>
</comment>
<comment type="disruption phenotype">
    <text evidence="3">Impairs the ability to produce TeA under the DMSO-added, TeA-inducing culture conditions.</text>
</comment>
<gene>
    <name evidence="5" type="primary">TAS2</name>
    <name type="ORF">MGG_07800</name>
</gene>
<sequence>MRQNSDYPSLGPFFFAGKIKLSIATESFSAMKRSRAESASGPQQPSRRQPQTSCDLCRSRKIKCDRGTPCGNCRTRGLACSIMSPSSAPSPGASSAESAGHGRLDTAILARLAALEQAVFRSTSAVGGSGNAENGAHGDATPRVPLSGLEREGRQTANFLDKAYDRCSSASTRSGYRPLDIRVAESCRDSFATGAPDPVWLMPQKDAVAMVHDFVENIYHLMPIVHIGSTVSVIDNVYPALQAGNINHVDPAQVALILGICAACAFFWDGGVPCQHRFETEGEATSASLIWKTSALYAFEEAQRRGSRSLEGAQACAILAYLTYNMDGPSTRFYRLHTCSVTACRELGIHLVDSRGCESTDSTARRELKRRLWWHVAATDWMLGLNGGPLDGTYTVHPRQARVALPRNLNDSDLAIDSEILTMPPHVPTQASCFLQVIRLAEICRMVVDSQSPDDSIADTAYNERVLASDELFKKAIESMPPPLVLTSPIPEGAPRFLCLQRASLHLGFHSRRARLLRPFLLYKDSDGRQGTTYRRSRELCVRSAQTVLEISTSLLEHSLRIRSPEPFRRQILHHPGHHSCPASPIHRLGVVVNHLFCACAILAFECSLRKNSSVHPRQQHRGAGGEDDLDGMLVHAYRLLAAAGEECTVAADLVCAMRGVFAKYRVDGDLATVDGRGGQNQIVGSSRSAMASVQTSAGGACNEQQQIGPAAWPGMRGAIPDENQPMGEGSLETGKAWDGFDKDLDDLFVANDTYCSWDQIFARLGSYCGP</sequence>
<keyword id="KW-0238">DNA-binding</keyword>
<keyword id="KW-0479">Metal-binding</keyword>
<keyword id="KW-0539">Nucleus</keyword>
<keyword id="KW-1185">Reference proteome</keyword>
<keyword id="KW-0804">Transcription</keyword>
<keyword id="KW-0805">Transcription regulation</keyword>
<keyword id="KW-0843">Virulence</keyword>
<keyword id="KW-0862">Zinc</keyword>
<accession>G4N134</accession>
<feature type="chain" id="PRO_0000452834" description="Transcription factor TAS2">
    <location>
        <begin position="1"/>
        <end position="771"/>
    </location>
</feature>
<feature type="DNA-binding region" description="Zn(2)-C6 fungal-type" evidence="1">
    <location>
        <begin position="54"/>
        <end position="80"/>
    </location>
</feature>
<feature type="region of interest" description="Disordered" evidence="2">
    <location>
        <begin position="33"/>
        <end position="53"/>
    </location>
</feature>
<feature type="region of interest" description="Disordered" evidence="2">
    <location>
        <begin position="125"/>
        <end position="150"/>
    </location>
</feature>
<feature type="compositionally biased region" description="Low complexity" evidence="2">
    <location>
        <begin position="42"/>
        <end position="51"/>
    </location>
</feature>
<dbReference type="EMBL" id="CM001233">
    <property type="protein sequence ID" value="EHA53210.1"/>
    <property type="molecule type" value="Genomic_DNA"/>
</dbReference>
<dbReference type="RefSeq" id="XP_003713017.1">
    <property type="nucleotide sequence ID" value="XM_003712969.1"/>
</dbReference>
<dbReference type="STRING" id="242507.G4N134"/>
<dbReference type="EnsemblFungi" id="MGG_07800T0">
    <property type="protein sequence ID" value="MGG_07800T0"/>
    <property type="gene ID" value="MGG_07800"/>
</dbReference>
<dbReference type="GeneID" id="2683727"/>
<dbReference type="KEGG" id="mgr:MGG_07800"/>
<dbReference type="VEuPathDB" id="FungiDB:MGG_07800"/>
<dbReference type="eggNOG" id="ENOG502SJ9D">
    <property type="taxonomic scope" value="Eukaryota"/>
</dbReference>
<dbReference type="HOGENOM" id="CLU_013260_2_0_1"/>
<dbReference type="InParanoid" id="G4N134"/>
<dbReference type="OMA" id="VVCQHEG"/>
<dbReference type="OrthoDB" id="3014581at2759"/>
<dbReference type="PHI-base" id="PHI:5606"/>
<dbReference type="Proteomes" id="UP000009058">
    <property type="component" value="Chromosome 3"/>
</dbReference>
<dbReference type="GO" id="GO:0005634">
    <property type="term" value="C:nucleus"/>
    <property type="evidence" value="ECO:0007669"/>
    <property type="project" value="UniProtKB-SubCell"/>
</dbReference>
<dbReference type="GO" id="GO:0003677">
    <property type="term" value="F:DNA binding"/>
    <property type="evidence" value="ECO:0007669"/>
    <property type="project" value="UniProtKB-KW"/>
</dbReference>
<dbReference type="GO" id="GO:0000981">
    <property type="term" value="F:DNA-binding transcription factor activity, RNA polymerase II-specific"/>
    <property type="evidence" value="ECO:0007669"/>
    <property type="project" value="InterPro"/>
</dbReference>
<dbReference type="GO" id="GO:0008270">
    <property type="term" value="F:zinc ion binding"/>
    <property type="evidence" value="ECO:0007669"/>
    <property type="project" value="InterPro"/>
</dbReference>
<dbReference type="GO" id="GO:0006351">
    <property type="term" value="P:DNA-templated transcription"/>
    <property type="evidence" value="ECO:0007669"/>
    <property type="project" value="InterPro"/>
</dbReference>
<dbReference type="CDD" id="cd12148">
    <property type="entry name" value="fungal_TF_MHR"/>
    <property type="match status" value="1"/>
</dbReference>
<dbReference type="CDD" id="cd00067">
    <property type="entry name" value="GAL4"/>
    <property type="match status" value="1"/>
</dbReference>
<dbReference type="Gene3D" id="4.10.240.10">
    <property type="entry name" value="Zn(2)-C6 fungal-type DNA-binding domain"/>
    <property type="match status" value="1"/>
</dbReference>
<dbReference type="InterPro" id="IPR050613">
    <property type="entry name" value="Sec_Metabolite_Reg"/>
</dbReference>
<dbReference type="InterPro" id="IPR007219">
    <property type="entry name" value="Transcription_factor_dom_fun"/>
</dbReference>
<dbReference type="InterPro" id="IPR036864">
    <property type="entry name" value="Zn2-C6_fun-type_DNA-bd_sf"/>
</dbReference>
<dbReference type="InterPro" id="IPR001138">
    <property type="entry name" value="Zn2Cys6_DnaBD"/>
</dbReference>
<dbReference type="PANTHER" id="PTHR31001:SF90">
    <property type="entry name" value="CENTROMERE DNA-BINDING PROTEIN COMPLEX CBF3 SUBUNIT B"/>
    <property type="match status" value="1"/>
</dbReference>
<dbReference type="PANTHER" id="PTHR31001">
    <property type="entry name" value="UNCHARACTERIZED TRANSCRIPTIONAL REGULATORY PROTEIN"/>
    <property type="match status" value="1"/>
</dbReference>
<dbReference type="Pfam" id="PF04082">
    <property type="entry name" value="Fungal_trans"/>
    <property type="match status" value="1"/>
</dbReference>
<dbReference type="Pfam" id="PF00172">
    <property type="entry name" value="Zn_clus"/>
    <property type="match status" value="1"/>
</dbReference>
<dbReference type="SMART" id="SM00066">
    <property type="entry name" value="GAL4"/>
    <property type="match status" value="1"/>
</dbReference>
<dbReference type="SUPFAM" id="SSF57701">
    <property type="entry name" value="Zn2/Cys6 DNA-binding domain"/>
    <property type="match status" value="1"/>
</dbReference>
<dbReference type="PROSITE" id="PS00463">
    <property type="entry name" value="ZN2_CY6_FUNGAL_1"/>
    <property type="match status" value="1"/>
</dbReference>
<dbReference type="PROSITE" id="PS50048">
    <property type="entry name" value="ZN2_CY6_FUNGAL_2"/>
    <property type="match status" value="1"/>
</dbReference>
<proteinExistence type="evidence at transcript level"/>
<protein>
    <recommendedName>
        <fullName evidence="5">Transcription factor TAS2</fullName>
    </recommendedName>
    <alternativeName>
        <fullName evidence="5">Tenuazonic acid biosynthesis cluster protein 2</fullName>
    </alternativeName>
</protein>